<comment type="function">
    <text evidence="1">Catalyzes the oxidation of glucose 6-phosphate to 6-phosphogluconolactone.</text>
</comment>
<comment type="catalytic activity">
    <reaction evidence="1">
        <text>D-glucose 6-phosphate + NADP(+) = 6-phospho-D-glucono-1,5-lactone + NADPH + H(+)</text>
        <dbReference type="Rhea" id="RHEA:15841"/>
        <dbReference type="ChEBI" id="CHEBI:15378"/>
        <dbReference type="ChEBI" id="CHEBI:57783"/>
        <dbReference type="ChEBI" id="CHEBI:57955"/>
        <dbReference type="ChEBI" id="CHEBI:58349"/>
        <dbReference type="ChEBI" id="CHEBI:61548"/>
        <dbReference type="EC" id="1.1.1.49"/>
    </reaction>
</comment>
<comment type="pathway">
    <text evidence="1">Carbohydrate degradation; pentose phosphate pathway; D-ribulose 5-phosphate from D-glucose 6-phosphate (oxidative stage): step 1/3.</text>
</comment>
<comment type="similarity">
    <text evidence="1">Belongs to the glucose-6-phosphate dehydrogenase family.</text>
</comment>
<name>G6PD_ECO57</name>
<sequence>MAVTQTAQVCDLVIFGAKGDLARRKLLPSLYQLEKAGQLNPDTRIIGVGRADWDKAAYTKVVREALETFMKETIDEGLWDTLSARLDFCNLDVNDTAAFSRLGAMLDQKNRITINYFAMPPSTFGAICKGLGEAKLNAKPARVVMEKPLGTSLATSQEINDQVGEYFEECQVYRIDHYLGKETVLNLLALRFANSLFVNNWDNRTIDHVEITVAEEVGIEGRWGYFDKAGQMRDMIQNHLLQILCMIAMSPPSDLSADSIRDEKVKVLKSLRRIDRSNVREKTVRGQYTAGFAQGKKVPGYLEEEGANKSSNTETFVAIRVDIDNWRWAGVPFYLRTGKRLPTKCSEVVVYFKTPELNLFKESWQDLPQNKLTIRLQPDEGVDIQVLNKVPGLDHKHNLQITKLDLSYSETFNQTHLADAYERLLLETMRGIQALFVRRDEVEEAWKWVDSITEAWAMDNDAPKPYQAGTWGPVASVAMITRDGRSWNEFE</sequence>
<reference key="1">
    <citation type="journal article" date="2001" name="Nature">
        <title>Genome sequence of enterohaemorrhagic Escherichia coli O157:H7.</title>
        <authorList>
            <person name="Perna N.T."/>
            <person name="Plunkett G. III"/>
            <person name="Burland V."/>
            <person name="Mau B."/>
            <person name="Glasner J.D."/>
            <person name="Rose D.J."/>
            <person name="Mayhew G.F."/>
            <person name="Evans P.S."/>
            <person name="Gregor J."/>
            <person name="Kirkpatrick H.A."/>
            <person name="Posfai G."/>
            <person name="Hackett J."/>
            <person name="Klink S."/>
            <person name="Boutin A."/>
            <person name="Shao Y."/>
            <person name="Miller L."/>
            <person name="Grotbeck E.J."/>
            <person name="Davis N.W."/>
            <person name="Lim A."/>
            <person name="Dimalanta E.T."/>
            <person name="Potamousis K."/>
            <person name="Apodaca J."/>
            <person name="Anantharaman T.S."/>
            <person name="Lin J."/>
            <person name="Yen G."/>
            <person name="Schwartz D.C."/>
            <person name="Welch R.A."/>
            <person name="Blattner F.R."/>
        </authorList>
    </citation>
    <scope>NUCLEOTIDE SEQUENCE [LARGE SCALE GENOMIC DNA]</scope>
    <source>
        <strain>O157:H7 / EDL933 / ATCC 700927 / EHEC</strain>
    </source>
</reference>
<reference key="2">
    <citation type="journal article" date="2001" name="DNA Res.">
        <title>Complete genome sequence of enterohemorrhagic Escherichia coli O157:H7 and genomic comparison with a laboratory strain K-12.</title>
        <authorList>
            <person name="Hayashi T."/>
            <person name="Makino K."/>
            <person name="Ohnishi M."/>
            <person name="Kurokawa K."/>
            <person name="Ishii K."/>
            <person name="Yokoyama K."/>
            <person name="Han C.-G."/>
            <person name="Ohtsubo E."/>
            <person name="Nakayama K."/>
            <person name="Murata T."/>
            <person name="Tanaka M."/>
            <person name="Tobe T."/>
            <person name="Iida T."/>
            <person name="Takami H."/>
            <person name="Honda T."/>
            <person name="Sasakawa C."/>
            <person name="Ogasawara N."/>
            <person name="Yasunaga T."/>
            <person name="Kuhara S."/>
            <person name="Shiba T."/>
            <person name="Hattori M."/>
            <person name="Shinagawa H."/>
        </authorList>
    </citation>
    <scope>NUCLEOTIDE SEQUENCE [LARGE SCALE GENOMIC DNA]</scope>
    <source>
        <strain>O157:H7 / Sakai / RIMD 0509952 / EHEC</strain>
    </source>
</reference>
<proteinExistence type="inferred from homology"/>
<keyword id="KW-0119">Carbohydrate metabolism</keyword>
<keyword id="KW-0313">Glucose metabolism</keyword>
<keyword id="KW-0521">NADP</keyword>
<keyword id="KW-0560">Oxidoreductase</keyword>
<keyword id="KW-1185">Reference proteome</keyword>
<accession>Q8XCJ6</accession>
<accession>Q7AD71</accession>
<gene>
    <name evidence="1" type="primary">zwf</name>
    <name type="ordered locus">Z2904</name>
    <name type="ordered locus">ECs2562</name>
</gene>
<dbReference type="EC" id="1.1.1.49" evidence="1"/>
<dbReference type="EMBL" id="AE005174">
    <property type="protein sequence ID" value="AAG56842.1"/>
    <property type="molecule type" value="Genomic_DNA"/>
</dbReference>
<dbReference type="EMBL" id="BA000007">
    <property type="protein sequence ID" value="BAB35985.1"/>
    <property type="molecule type" value="Genomic_DNA"/>
</dbReference>
<dbReference type="PIR" id="B90949">
    <property type="entry name" value="B90949"/>
</dbReference>
<dbReference type="PIR" id="F85797">
    <property type="entry name" value="F85797"/>
</dbReference>
<dbReference type="RefSeq" id="NP_310589.1">
    <property type="nucleotide sequence ID" value="NC_002695.1"/>
</dbReference>
<dbReference type="RefSeq" id="WP_000301737.1">
    <property type="nucleotide sequence ID" value="NZ_VOAI01000010.1"/>
</dbReference>
<dbReference type="SMR" id="Q8XCJ6"/>
<dbReference type="STRING" id="155864.Z2904"/>
<dbReference type="GeneID" id="912956"/>
<dbReference type="KEGG" id="ece:Z2904"/>
<dbReference type="KEGG" id="ecs:ECs_2562"/>
<dbReference type="PATRIC" id="fig|386585.9.peg.2685"/>
<dbReference type="eggNOG" id="COG0364">
    <property type="taxonomic scope" value="Bacteria"/>
</dbReference>
<dbReference type="HOGENOM" id="CLU_013524_5_0_6"/>
<dbReference type="OMA" id="ERAGYYE"/>
<dbReference type="UniPathway" id="UPA00115">
    <property type="reaction ID" value="UER00408"/>
</dbReference>
<dbReference type="Proteomes" id="UP000000558">
    <property type="component" value="Chromosome"/>
</dbReference>
<dbReference type="Proteomes" id="UP000002519">
    <property type="component" value="Chromosome"/>
</dbReference>
<dbReference type="GO" id="GO:0005829">
    <property type="term" value="C:cytosol"/>
    <property type="evidence" value="ECO:0007669"/>
    <property type="project" value="TreeGrafter"/>
</dbReference>
<dbReference type="GO" id="GO:0004345">
    <property type="term" value="F:glucose-6-phosphate dehydrogenase activity"/>
    <property type="evidence" value="ECO:0007669"/>
    <property type="project" value="UniProtKB-UniRule"/>
</dbReference>
<dbReference type="GO" id="GO:0050661">
    <property type="term" value="F:NADP binding"/>
    <property type="evidence" value="ECO:0007669"/>
    <property type="project" value="UniProtKB-UniRule"/>
</dbReference>
<dbReference type="GO" id="GO:0006006">
    <property type="term" value="P:glucose metabolic process"/>
    <property type="evidence" value="ECO:0007669"/>
    <property type="project" value="UniProtKB-KW"/>
</dbReference>
<dbReference type="GO" id="GO:0009051">
    <property type="term" value="P:pentose-phosphate shunt, oxidative branch"/>
    <property type="evidence" value="ECO:0007669"/>
    <property type="project" value="TreeGrafter"/>
</dbReference>
<dbReference type="FunFam" id="3.30.360.10:FF:000011">
    <property type="entry name" value="Glucose-6-phosphate 1-dehydrogenase"/>
    <property type="match status" value="1"/>
</dbReference>
<dbReference type="FunFam" id="3.40.50.720:FF:000079">
    <property type="entry name" value="Glucose-6-phosphate 1-dehydrogenase"/>
    <property type="match status" value="1"/>
</dbReference>
<dbReference type="Gene3D" id="3.30.360.10">
    <property type="entry name" value="Dihydrodipicolinate Reductase, domain 2"/>
    <property type="match status" value="1"/>
</dbReference>
<dbReference type="Gene3D" id="3.40.50.720">
    <property type="entry name" value="NAD(P)-binding Rossmann-like Domain"/>
    <property type="match status" value="1"/>
</dbReference>
<dbReference type="HAMAP" id="MF_00966">
    <property type="entry name" value="G6PD"/>
    <property type="match status" value="1"/>
</dbReference>
<dbReference type="InterPro" id="IPR001282">
    <property type="entry name" value="G6P_DH"/>
</dbReference>
<dbReference type="InterPro" id="IPR019796">
    <property type="entry name" value="G6P_DH_AS"/>
</dbReference>
<dbReference type="InterPro" id="IPR022675">
    <property type="entry name" value="G6P_DH_C"/>
</dbReference>
<dbReference type="InterPro" id="IPR022674">
    <property type="entry name" value="G6P_DH_NAD-bd"/>
</dbReference>
<dbReference type="InterPro" id="IPR036291">
    <property type="entry name" value="NAD(P)-bd_dom_sf"/>
</dbReference>
<dbReference type="NCBIfam" id="NF009492">
    <property type="entry name" value="PRK12853.1-3"/>
    <property type="match status" value="1"/>
</dbReference>
<dbReference type="NCBIfam" id="TIGR00871">
    <property type="entry name" value="zwf"/>
    <property type="match status" value="1"/>
</dbReference>
<dbReference type="PANTHER" id="PTHR23429:SF0">
    <property type="entry name" value="GLUCOSE-6-PHOSPHATE 1-DEHYDROGENASE"/>
    <property type="match status" value="1"/>
</dbReference>
<dbReference type="PANTHER" id="PTHR23429">
    <property type="entry name" value="GLUCOSE-6-PHOSPHATE 1-DEHYDROGENASE G6PD"/>
    <property type="match status" value="1"/>
</dbReference>
<dbReference type="Pfam" id="PF02781">
    <property type="entry name" value="G6PD_C"/>
    <property type="match status" value="1"/>
</dbReference>
<dbReference type="Pfam" id="PF00479">
    <property type="entry name" value="G6PD_N"/>
    <property type="match status" value="1"/>
</dbReference>
<dbReference type="PIRSF" id="PIRSF000110">
    <property type="entry name" value="G6PD"/>
    <property type="match status" value="1"/>
</dbReference>
<dbReference type="PRINTS" id="PR00079">
    <property type="entry name" value="G6PDHDRGNASE"/>
</dbReference>
<dbReference type="SUPFAM" id="SSF55347">
    <property type="entry name" value="Glyceraldehyde-3-phosphate dehydrogenase-like, C-terminal domain"/>
    <property type="match status" value="1"/>
</dbReference>
<dbReference type="SUPFAM" id="SSF51735">
    <property type="entry name" value="NAD(P)-binding Rossmann-fold domains"/>
    <property type="match status" value="1"/>
</dbReference>
<dbReference type="PROSITE" id="PS00069">
    <property type="entry name" value="G6P_DEHYDROGENASE"/>
    <property type="match status" value="1"/>
</dbReference>
<feature type="chain" id="PRO_0000068119" description="Glucose-6-phosphate 1-dehydrogenase">
    <location>
        <begin position="1"/>
        <end position="491"/>
    </location>
</feature>
<feature type="active site" description="Proton acceptor" evidence="1">
    <location>
        <position position="239"/>
    </location>
</feature>
<feature type="binding site" evidence="1">
    <location>
        <position position="50"/>
    </location>
    <ligand>
        <name>NADP(+)</name>
        <dbReference type="ChEBI" id="CHEBI:58349"/>
    </ligand>
</feature>
<feature type="binding site" evidence="1">
    <location>
        <begin position="92"/>
        <end position="93"/>
    </location>
    <ligand>
        <name>NADP(+)</name>
        <dbReference type="ChEBI" id="CHEBI:58349"/>
    </ligand>
</feature>
<feature type="binding site" evidence="1">
    <location>
        <position position="147"/>
    </location>
    <ligand>
        <name>NADP(+)</name>
        <dbReference type="ChEBI" id="CHEBI:58349"/>
    </ligand>
</feature>
<feature type="binding site" evidence="1">
    <location>
        <position position="177"/>
    </location>
    <ligand>
        <name>substrate</name>
    </ligand>
</feature>
<feature type="binding site" evidence="1">
    <location>
        <position position="181"/>
    </location>
    <ligand>
        <name>substrate</name>
    </ligand>
</feature>
<feature type="binding site" evidence="1">
    <location>
        <position position="215"/>
    </location>
    <ligand>
        <name>substrate</name>
    </ligand>
</feature>
<feature type="binding site" evidence="1">
    <location>
        <position position="234"/>
    </location>
    <ligand>
        <name>substrate</name>
    </ligand>
</feature>
<feature type="binding site" evidence="1">
    <location>
        <position position="339"/>
    </location>
    <ligand>
        <name>substrate</name>
    </ligand>
</feature>
<feature type="binding site" evidence="1">
    <location>
        <position position="344"/>
    </location>
    <ligand>
        <name>substrate</name>
    </ligand>
</feature>
<protein>
    <recommendedName>
        <fullName evidence="1">Glucose-6-phosphate 1-dehydrogenase</fullName>
        <shortName evidence="1">G6PD</shortName>
        <ecNumber evidence="1">1.1.1.49</ecNumber>
    </recommendedName>
</protein>
<organism>
    <name type="scientific">Escherichia coli O157:H7</name>
    <dbReference type="NCBI Taxonomy" id="83334"/>
    <lineage>
        <taxon>Bacteria</taxon>
        <taxon>Pseudomonadati</taxon>
        <taxon>Pseudomonadota</taxon>
        <taxon>Gammaproteobacteria</taxon>
        <taxon>Enterobacterales</taxon>
        <taxon>Enterobacteriaceae</taxon>
        <taxon>Escherichia</taxon>
    </lineage>
</organism>
<evidence type="ECO:0000255" key="1">
    <source>
        <dbReference type="HAMAP-Rule" id="MF_00966"/>
    </source>
</evidence>